<organism>
    <name type="scientific">Thermus caldophilus</name>
    <dbReference type="NCBI Taxonomy" id="272"/>
    <lineage>
        <taxon>Bacteria</taxon>
        <taxon>Thermotogati</taxon>
        <taxon>Deinococcota</taxon>
        <taxon>Deinococci</taxon>
        <taxon>Thermales</taxon>
        <taxon>Thermaceae</taxon>
        <taxon>Thermus</taxon>
    </lineage>
</organism>
<dbReference type="EMBL" id="AF007553">
    <property type="protein sequence ID" value="AAD01407.1"/>
    <property type="molecule type" value="Genomic_DNA"/>
</dbReference>
<dbReference type="SMR" id="Q9ZIX6"/>
<dbReference type="GO" id="GO:0005524">
    <property type="term" value="F:ATP binding"/>
    <property type="evidence" value="ECO:0007669"/>
    <property type="project" value="UniProtKB-UniRule"/>
</dbReference>
<dbReference type="GO" id="GO:0140664">
    <property type="term" value="F:ATP-dependent DNA damage sensor activity"/>
    <property type="evidence" value="ECO:0007669"/>
    <property type="project" value="InterPro"/>
</dbReference>
<dbReference type="GO" id="GO:0003684">
    <property type="term" value="F:damaged DNA binding"/>
    <property type="evidence" value="ECO:0007669"/>
    <property type="project" value="UniProtKB-UniRule"/>
</dbReference>
<dbReference type="GO" id="GO:0030983">
    <property type="term" value="F:mismatched DNA binding"/>
    <property type="evidence" value="ECO:0007669"/>
    <property type="project" value="InterPro"/>
</dbReference>
<dbReference type="GO" id="GO:0006298">
    <property type="term" value="P:mismatch repair"/>
    <property type="evidence" value="ECO:0007669"/>
    <property type="project" value="UniProtKB-UniRule"/>
</dbReference>
<dbReference type="CDD" id="cd03284">
    <property type="entry name" value="ABC_MutS1"/>
    <property type="match status" value="1"/>
</dbReference>
<dbReference type="Gene3D" id="1.10.1420.10">
    <property type="match status" value="2"/>
</dbReference>
<dbReference type="Gene3D" id="6.10.140.430">
    <property type="match status" value="1"/>
</dbReference>
<dbReference type="Gene3D" id="3.40.1170.10">
    <property type="entry name" value="DNA repair protein MutS, domain I"/>
    <property type="match status" value="1"/>
</dbReference>
<dbReference type="Gene3D" id="3.30.420.110">
    <property type="entry name" value="MutS, connector domain"/>
    <property type="match status" value="1"/>
</dbReference>
<dbReference type="Gene3D" id="3.40.50.300">
    <property type="entry name" value="P-loop containing nucleotide triphosphate hydrolases"/>
    <property type="match status" value="1"/>
</dbReference>
<dbReference type="HAMAP" id="MF_00096">
    <property type="entry name" value="MutS"/>
    <property type="match status" value="1"/>
</dbReference>
<dbReference type="InterPro" id="IPR005748">
    <property type="entry name" value="DNA_mismatch_repair_MutS"/>
</dbReference>
<dbReference type="InterPro" id="IPR007695">
    <property type="entry name" value="DNA_mismatch_repair_MutS-lik_N"/>
</dbReference>
<dbReference type="InterPro" id="IPR017261">
    <property type="entry name" value="DNA_mismatch_repair_MutS/MSH"/>
</dbReference>
<dbReference type="InterPro" id="IPR000432">
    <property type="entry name" value="DNA_mismatch_repair_MutS_C"/>
</dbReference>
<dbReference type="InterPro" id="IPR007861">
    <property type="entry name" value="DNA_mismatch_repair_MutS_clamp"/>
</dbReference>
<dbReference type="InterPro" id="IPR007696">
    <property type="entry name" value="DNA_mismatch_repair_MutS_core"/>
</dbReference>
<dbReference type="InterPro" id="IPR016151">
    <property type="entry name" value="DNA_mismatch_repair_MutS_N"/>
</dbReference>
<dbReference type="InterPro" id="IPR036187">
    <property type="entry name" value="DNA_mismatch_repair_MutS_sf"/>
</dbReference>
<dbReference type="InterPro" id="IPR007860">
    <property type="entry name" value="DNA_mmatch_repair_MutS_con_dom"/>
</dbReference>
<dbReference type="InterPro" id="IPR045076">
    <property type="entry name" value="MutS"/>
</dbReference>
<dbReference type="InterPro" id="IPR036678">
    <property type="entry name" value="MutS_con_dom_sf"/>
</dbReference>
<dbReference type="InterPro" id="IPR027417">
    <property type="entry name" value="P-loop_NTPase"/>
</dbReference>
<dbReference type="NCBIfam" id="TIGR01070">
    <property type="entry name" value="mutS1"/>
    <property type="match status" value="1"/>
</dbReference>
<dbReference type="NCBIfam" id="NF003810">
    <property type="entry name" value="PRK05399.1"/>
    <property type="match status" value="1"/>
</dbReference>
<dbReference type="PANTHER" id="PTHR11361:SF34">
    <property type="entry name" value="DNA MISMATCH REPAIR PROTEIN MSH1, MITOCHONDRIAL"/>
    <property type="match status" value="1"/>
</dbReference>
<dbReference type="PANTHER" id="PTHR11361">
    <property type="entry name" value="DNA MISMATCH REPAIR PROTEIN MUTS FAMILY MEMBER"/>
    <property type="match status" value="1"/>
</dbReference>
<dbReference type="Pfam" id="PF01624">
    <property type="entry name" value="MutS_I"/>
    <property type="match status" value="1"/>
</dbReference>
<dbReference type="Pfam" id="PF05188">
    <property type="entry name" value="MutS_II"/>
    <property type="match status" value="1"/>
</dbReference>
<dbReference type="Pfam" id="PF05192">
    <property type="entry name" value="MutS_III"/>
    <property type="match status" value="1"/>
</dbReference>
<dbReference type="Pfam" id="PF05190">
    <property type="entry name" value="MutS_IV"/>
    <property type="match status" value="1"/>
</dbReference>
<dbReference type="Pfam" id="PF00488">
    <property type="entry name" value="MutS_V"/>
    <property type="match status" value="1"/>
</dbReference>
<dbReference type="PIRSF" id="PIRSF037677">
    <property type="entry name" value="DNA_mis_repair_Msh6"/>
    <property type="match status" value="1"/>
</dbReference>
<dbReference type="SMART" id="SM00534">
    <property type="entry name" value="MUTSac"/>
    <property type="match status" value="1"/>
</dbReference>
<dbReference type="SMART" id="SM00533">
    <property type="entry name" value="MUTSd"/>
    <property type="match status" value="1"/>
</dbReference>
<dbReference type="SUPFAM" id="SSF55271">
    <property type="entry name" value="DNA repair protein MutS, domain I"/>
    <property type="match status" value="1"/>
</dbReference>
<dbReference type="SUPFAM" id="SSF53150">
    <property type="entry name" value="DNA repair protein MutS, domain II"/>
    <property type="match status" value="1"/>
</dbReference>
<dbReference type="SUPFAM" id="SSF48334">
    <property type="entry name" value="DNA repair protein MutS, domain III"/>
    <property type="match status" value="1"/>
</dbReference>
<dbReference type="SUPFAM" id="SSF52540">
    <property type="entry name" value="P-loop containing nucleoside triphosphate hydrolases"/>
    <property type="match status" value="1"/>
</dbReference>
<dbReference type="PROSITE" id="PS00486">
    <property type="entry name" value="DNA_MISMATCH_REPAIR_2"/>
    <property type="match status" value="1"/>
</dbReference>
<evidence type="ECO:0000250" key="1"/>
<evidence type="ECO:0000255" key="2"/>
<evidence type="ECO:0000305" key="3"/>
<reference key="1">
    <citation type="submission" date="1997-06" db="EMBL/GenBank/DDBJ databases">
        <authorList>
            <person name="Nashiru O."/>
            <person name="Park B.C."/>
            <person name="Ko J.H."/>
            <person name="Kim J.S."/>
            <person name="Koh S.K."/>
            <person name="Lee H.C."/>
            <person name="Kim C.H."/>
            <person name="Lee S.Y."/>
            <person name="Lee D.-S."/>
        </authorList>
    </citation>
    <scope>NUCLEOTIDE SEQUENCE [GENOMIC DNA]</scope>
    <source>
        <strain>GK24</strain>
    </source>
</reference>
<feature type="chain" id="PRO_0000115157" description="DNA mismatch repair protein MutS">
    <location>
        <begin position="1"/>
        <end position="817"/>
    </location>
</feature>
<feature type="binding site" evidence="2">
    <location>
        <begin position="589"/>
        <end position="596"/>
    </location>
    <ligand>
        <name>ATP</name>
        <dbReference type="ChEBI" id="CHEBI:30616"/>
    </ligand>
</feature>
<keyword id="KW-0067">ATP-binding</keyword>
<keyword id="KW-0227">DNA damage</keyword>
<keyword id="KW-0234">DNA repair</keyword>
<keyword id="KW-0238">DNA-binding</keyword>
<keyword id="KW-0547">Nucleotide-binding</keyword>
<accession>Q9ZIX6</accession>
<name>MUTS_THECA</name>
<comment type="function">
    <text evidence="1">This protein is involved in the repair of mismatches in DNA. It is possible that it carries out the mismatch recognition step. This protein has a weak ATPase activity (By similarity).</text>
</comment>
<comment type="similarity">
    <text evidence="3">Belongs to the DNA mismatch repair MutS family.</text>
</comment>
<gene>
    <name type="primary">mutS</name>
</gene>
<proteinExistence type="inferred from homology"/>
<sequence>MPAVKMGVMLKGEGPGPLPPLLQQYVELRDRYPDYLLLFQVGDFYECFGEDAERLARALGLVLTHKTSKDFTTPMAGIPIRAFDAYAERLLRMGFGLAVADQVEPAEEAEGLVRREVTQLLTPGTLTQEALLPREANYLAAIATGDGWGLAFLDVSTGEFKATLLKSKSALYDELFRHRPAEVLLAPELRENEAFVAQFRKRFPVMLSEAPFDPEGEAPLALSRARGALLAYARATQGGALSVRPFRLYDPGAIVRLPEASLKALEVFEPLRGQDTLFGVLDETRTAPGRRLLQAWLRHPLLERGPLEARLDRVERFVREGALREGVRRLLFRLADLERLATRLELSRASPRDLAALRRRSLEILPELEGLLGEEVGLPDLSGLLEELRAALVEDPPLKVSEGGVIREGYDPDLDALRRAHADPVAYFLDLEVREKESTGIPTLKVGYNAVFGYYLEVTRPYYEKVPQEYRPVQTLKDRQRYTLPEMKERERELYRLEALIKRREEEVFIALRERARKEGEALREAARILAELDVYAALAEVAVRHGYTRPRFGERLRIRAGRHPVVRRRTAFVPNDLEMAHELVRVTGPNMAGKSTFLRQTALIALLAQIGSFVPAEEAELPLFDGIYTRIGASDDLAGGKSTFMVEMEEVALVLKEATERSLVLLDEVGRGTSSLDGVAIATALAEALHERRCYTLFATHYFELTALALPRLKNLHVAAKEEEGGLVFYHQVLPGPASKSYGVEVAEMAGLPKEVVERARALLSAMAARREGALEEVLERLLALDPDRLTPLEALRFLHELKALALGLPLGSMKG</sequence>
<protein>
    <recommendedName>
        <fullName>DNA mismatch repair protein MutS</fullName>
    </recommendedName>
</protein>